<organism>
    <name type="scientific">Balaenoptera acutorostrata</name>
    <name type="common">Common minke whale</name>
    <name type="synonym">Balaena rostrata</name>
    <dbReference type="NCBI Taxonomy" id="9767"/>
    <lineage>
        <taxon>Eukaryota</taxon>
        <taxon>Metazoa</taxon>
        <taxon>Chordata</taxon>
        <taxon>Craniata</taxon>
        <taxon>Vertebrata</taxon>
        <taxon>Euteleostomi</taxon>
        <taxon>Mammalia</taxon>
        <taxon>Eutheria</taxon>
        <taxon>Laurasiatheria</taxon>
        <taxon>Artiodactyla</taxon>
        <taxon>Whippomorpha</taxon>
        <taxon>Cetacea</taxon>
        <taxon>Mysticeti</taxon>
        <taxon>Balaenopteridae</taxon>
        <taxon>Balaenoptera</taxon>
    </lineage>
</organism>
<gene>
    <name type="primary">SRY</name>
    <name type="synonym">TDF</name>
</gene>
<accession>Q864R2</accession>
<name>SRY_BALAC</name>
<protein>
    <recommendedName>
        <fullName>Sex-determining region Y protein</fullName>
    </recommendedName>
    <alternativeName>
        <fullName>Testis-determining factor</fullName>
    </alternativeName>
</protein>
<evidence type="ECO:0000250" key="1">
    <source>
        <dbReference type="UniProtKB" id="P36394"/>
    </source>
</evidence>
<evidence type="ECO:0000250" key="2">
    <source>
        <dbReference type="UniProtKB" id="Q05066"/>
    </source>
</evidence>
<evidence type="ECO:0000255" key="3">
    <source>
        <dbReference type="PROSITE-ProRule" id="PRU00267"/>
    </source>
</evidence>
<evidence type="ECO:0000256" key="4">
    <source>
        <dbReference type="SAM" id="MobiDB-lite"/>
    </source>
</evidence>
<evidence type="ECO:0000305" key="5"/>
<proteinExistence type="inferred from homology"/>
<dbReference type="EMBL" id="AB108509">
    <property type="protein sequence ID" value="BAC75641.1"/>
    <property type="molecule type" value="Genomic_DNA"/>
</dbReference>
<dbReference type="SMR" id="Q864R2"/>
<dbReference type="GO" id="GO:0005737">
    <property type="term" value="C:cytoplasm"/>
    <property type="evidence" value="ECO:0007669"/>
    <property type="project" value="UniProtKB-SubCell"/>
</dbReference>
<dbReference type="GO" id="GO:0016607">
    <property type="term" value="C:nuclear speck"/>
    <property type="evidence" value="ECO:0007669"/>
    <property type="project" value="UniProtKB-SubCell"/>
</dbReference>
<dbReference type="GO" id="GO:0005634">
    <property type="term" value="C:nucleus"/>
    <property type="evidence" value="ECO:0000250"/>
    <property type="project" value="UniProtKB"/>
</dbReference>
<dbReference type="GO" id="GO:0005516">
    <property type="term" value="F:calmodulin binding"/>
    <property type="evidence" value="ECO:0007669"/>
    <property type="project" value="UniProtKB-KW"/>
</dbReference>
<dbReference type="GO" id="GO:0001228">
    <property type="term" value="F:DNA-binding transcription activator activity, RNA polymerase II-specific"/>
    <property type="evidence" value="ECO:0007669"/>
    <property type="project" value="TreeGrafter"/>
</dbReference>
<dbReference type="GO" id="GO:0000978">
    <property type="term" value="F:RNA polymerase II cis-regulatory region sequence-specific DNA binding"/>
    <property type="evidence" value="ECO:0007669"/>
    <property type="project" value="TreeGrafter"/>
</dbReference>
<dbReference type="GO" id="GO:0030154">
    <property type="term" value="P:cell differentiation"/>
    <property type="evidence" value="ECO:0007669"/>
    <property type="project" value="UniProtKB-KW"/>
</dbReference>
<dbReference type="GO" id="GO:0030238">
    <property type="term" value="P:male sex determination"/>
    <property type="evidence" value="ECO:0007669"/>
    <property type="project" value="InterPro"/>
</dbReference>
<dbReference type="GO" id="GO:0007548">
    <property type="term" value="P:sex differentiation"/>
    <property type="evidence" value="ECO:0007669"/>
    <property type="project" value="UniProtKB-KW"/>
</dbReference>
<dbReference type="CDD" id="cd22034">
    <property type="entry name" value="HMG-box_SoxA_SRY"/>
    <property type="match status" value="1"/>
</dbReference>
<dbReference type="FunFam" id="1.10.30.10:FF:000002">
    <property type="entry name" value="transcription factor Sox-2"/>
    <property type="match status" value="1"/>
</dbReference>
<dbReference type="Gene3D" id="1.10.30.10">
    <property type="entry name" value="High mobility group box domain"/>
    <property type="match status" value="1"/>
</dbReference>
<dbReference type="InterPro" id="IPR009071">
    <property type="entry name" value="HMG_box_dom"/>
</dbReference>
<dbReference type="InterPro" id="IPR036910">
    <property type="entry name" value="HMG_box_dom_sf"/>
</dbReference>
<dbReference type="InterPro" id="IPR017253">
    <property type="entry name" value="SRY"/>
</dbReference>
<dbReference type="InterPro" id="IPR050140">
    <property type="entry name" value="SRY-related_HMG-box_TF-like"/>
</dbReference>
<dbReference type="PANTHER" id="PTHR10270:SF161">
    <property type="entry name" value="SEX-DETERMINING REGION Y PROTEIN"/>
    <property type="match status" value="1"/>
</dbReference>
<dbReference type="PANTHER" id="PTHR10270">
    <property type="entry name" value="SOX TRANSCRIPTION FACTOR"/>
    <property type="match status" value="1"/>
</dbReference>
<dbReference type="Pfam" id="PF00505">
    <property type="entry name" value="HMG_box"/>
    <property type="match status" value="1"/>
</dbReference>
<dbReference type="PIRSF" id="PIRSF037653">
    <property type="entry name" value="SRY"/>
    <property type="match status" value="1"/>
</dbReference>
<dbReference type="SMART" id="SM00398">
    <property type="entry name" value="HMG"/>
    <property type="match status" value="1"/>
</dbReference>
<dbReference type="SUPFAM" id="SSF47095">
    <property type="entry name" value="HMG-box"/>
    <property type="match status" value="1"/>
</dbReference>
<dbReference type="PROSITE" id="PS50118">
    <property type="entry name" value="HMG_BOX_2"/>
    <property type="match status" value="1"/>
</dbReference>
<reference key="1">
    <citation type="journal article" date="2003" name="Mammal Study">
        <title>SRY gene structure and phylogeny in the cetacean species.</title>
        <authorList>
            <person name="Nishida S."/>
            <person name="Pastene L.A."/>
            <person name="Goto M."/>
            <person name="Koike H."/>
        </authorList>
    </citation>
    <scope>NUCLEOTIDE SEQUENCE [GENOMIC DNA]</scope>
</reference>
<keyword id="KW-0007">Acetylation</keyword>
<keyword id="KW-0010">Activator</keyword>
<keyword id="KW-0112">Calmodulin-binding</keyword>
<keyword id="KW-0963">Cytoplasm</keyword>
<keyword id="KW-0221">Differentiation</keyword>
<keyword id="KW-0238">DNA-binding</keyword>
<keyword id="KW-0539">Nucleus</keyword>
<keyword id="KW-0678">Repressor</keyword>
<keyword id="KW-0726">Sexual differentiation</keyword>
<keyword id="KW-0804">Transcription</keyword>
<keyword id="KW-0805">Transcription regulation</keyword>
<sequence>MFRIVNGEDYSPAVQQRNSLDFGKAPSLLWTDNGGSNDRCETGGNGRESGQDRVKRPMNAFIVWSRDQRRKVALENPQMQNSEISKRLGYDWKMLTEAEKQPFFEEAQRLRAMHRDKYPGYKYRPRRKAKRPQKLLPADSSVLCSRMHIEETLYPFTYKDGCAKATRSRMESRLSYSQPTNTTSSLLPQEHRSSWTSLSHNRVT</sequence>
<comment type="function">
    <text evidence="1 2">Transcriptional regulator that controls a genetic switch in male development. It is necessary and sufficient for initiating male sex determination by directing the development of supporting cell precursors (pre-Sertoli cells) as Sertoli rather than granulosa cells. Involved in different aspects of gene regulation including promoter activation or repression. Binds to the DNA consensus sequence 5'-[AT]AACAA[AT]-3'. SRY HMG box recognizes DNA by partial intercalation in the minor groove and promotes DNA bending. Also involved in pre-mRNA splicing (By similarity). In male adult brain involved in the maintenance of motor functions of dopaminergic neurons (By similarity).</text>
</comment>
<comment type="subunit">
    <text evidence="2">Interacts with CALM, EP300, HDAC3, KPNB1, ZNF208 isoform KRAB-O, PARP1, SLC9A3R2 and WT1. The interaction with EP300 modulates its DNA-binding activity. The interaction with KPNB1 is sensitive to dissociation by Ran in the GTP-bound form. Interaction with PARP1 impaired its DNA-binding activity.</text>
</comment>
<comment type="subcellular location">
    <subcellularLocation>
        <location evidence="2">Nucleus speckle</location>
    </subcellularLocation>
    <subcellularLocation>
        <location evidence="2">Cytoplasm</location>
    </subcellularLocation>
    <subcellularLocation>
        <location evidence="2">Nucleus</location>
    </subcellularLocation>
</comment>
<comment type="PTM">
    <text evidence="2">Acetylation of Lys-130 contributes to its nuclear localization and enhances its interaction with KPNB1. Deacetylated by HDAC3.</text>
</comment>
<comment type="similarity">
    <text evidence="5">Belongs to the SRY family.</text>
</comment>
<comment type="online information" name="Protein Spotlight">
    <link uri="https://www.proteinspotlight.org/back_issues/080"/>
    <text>The tenuous nature of sex - Issue 80 of March 2007</text>
</comment>
<feature type="chain" id="PRO_0000048638" description="Sex-determining region Y protein">
    <location>
        <begin position="1"/>
        <end position="204"/>
    </location>
</feature>
<feature type="DNA-binding region" description="HMG box" evidence="3">
    <location>
        <begin position="54"/>
        <end position="122"/>
    </location>
</feature>
<feature type="region of interest" description="Disordered" evidence="4">
    <location>
        <begin position="30"/>
        <end position="52"/>
    </location>
</feature>
<feature type="region of interest" description="Disordered" evidence="4">
    <location>
        <begin position="171"/>
        <end position="204"/>
    </location>
</feature>
<feature type="compositionally biased region" description="Polar residues" evidence="4">
    <location>
        <begin position="174"/>
        <end position="187"/>
    </location>
</feature>
<feature type="compositionally biased region" description="Polar residues" evidence="4">
    <location>
        <begin position="194"/>
        <end position="204"/>
    </location>
</feature>